<sequence length="215" mass="23879">MESNPPDSTGPMHVPFGHIVANEKWRGSQLAQGMQGKIKLVFEDGLTPVDFYLSSKSCILYITEAELVAGNGYRKRLVRVRNSNKLQGIVVVEKTQMSEQYFPAVQKFTVLDLGMVLLPVASQMEASCLIIQLVQEQTREPSKNPFLRKKRALVSEPALLRSVQQIPGVGKVKAPLLLQRFPSIQQLSNASLRELEAVVGPAAAQRIHAFFSQPR</sequence>
<reference key="1">
    <citation type="submission" date="2006-01" db="EMBL/GenBank/DDBJ databases">
        <authorList>
            <consortium name="NIH - Mammalian Gene Collection (MGC) project"/>
        </authorList>
    </citation>
    <scope>NUCLEOTIDE SEQUENCE [LARGE SCALE MRNA]</scope>
    <source>
        <strain>Hereford</strain>
        <tissue>Hypothalamus</tissue>
    </source>
</reference>
<organism>
    <name type="scientific">Bos taurus</name>
    <name type="common">Bovine</name>
    <dbReference type="NCBI Taxonomy" id="9913"/>
    <lineage>
        <taxon>Eukaryota</taxon>
        <taxon>Metazoa</taxon>
        <taxon>Chordata</taxon>
        <taxon>Craniata</taxon>
        <taxon>Vertebrata</taxon>
        <taxon>Euteleostomi</taxon>
        <taxon>Mammalia</taxon>
        <taxon>Eutheria</taxon>
        <taxon>Laurasiatheria</taxon>
        <taxon>Artiodactyla</taxon>
        <taxon>Ruminantia</taxon>
        <taxon>Pecora</taxon>
        <taxon>Bovidae</taxon>
        <taxon>Bovinae</taxon>
        <taxon>Bos</taxon>
    </lineage>
</organism>
<dbReference type="EMBL" id="BC112837">
    <property type="protein sequence ID" value="AAI12838.1"/>
    <property type="molecule type" value="mRNA"/>
</dbReference>
<dbReference type="RefSeq" id="NP_001039527.1">
    <property type="nucleotide sequence ID" value="NM_001046062.2"/>
</dbReference>
<dbReference type="RefSeq" id="XP_024833888.1">
    <property type="nucleotide sequence ID" value="XM_024978120.2"/>
</dbReference>
<dbReference type="SMR" id="Q2KHY5"/>
<dbReference type="FunCoup" id="Q2KHY5">
    <property type="interactions" value="2732"/>
</dbReference>
<dbReference type="STRING" id="9913.ENSBTAP00000055729"/>
<dbReference type="PaxDb" id="9913-ENSBTAP00000055729"/>
<dbReference type="GeneID" id="510793"/>
<dbReference type="KEGG" id="bta:510793"/>
<dbReference type="CTD" id="91442"/>
<dbReference type="VEuPathDB" id="HostDB:ENSBTAG00000010403"/>
<dbReference type="eggNOG" id="KOG2841">
    <property type="taxonomic scope" value="Eukaryota"/>
</dbReference>
<dbReference type="HOGENOM" id="CLU_111628_0_0_1"/>
<dbReference type="InParanoid" id="Q2KHY5"/>
<dbReference type="OMA" id="GPVHVPF"/>
<dbReference type="OrthoDB" id="5975714at2759"/>
<dbReference type="Reactome" id="R-BTA-6783310">
    <property type="pathway name" value="Fanconi Anemia Pathway"/>
</dbReference>
<dbReference type="Reactome" id="R-BTA-9833482">
    <property type="pathway name" value="PKR-mediated signaling"/>
</dbReference>
<dbReference type="Proteomes" id="UP000009136">
    <property type="component" value="Chromosome 18"/>
</dbReference>
<dbReference type="Bgee" id="ENSBTAG00000010403">
    <property type="expression patterns" value="Expressed in oocyte and 106 other cell types or tissues"/>
</dbReference>
<dbReference type="GO" id="GO:0043240">
    <property type="term" value="C:Fanconi anaemia nuclear complex"/>
    <property type="evidence" value="ECO:0000318"/>
    <property type="project" value="GO_Central"/>
</dbReference>
<dbReference type="GO" id="GO:0003682">
    <property type="term" value="F:chromatin binding"/>
    <property type="evidence" value="ECO:0000318"/>
    <property type="project" value="GO_Central"/>
</dbReference>
<dbReference type="GO" id="GO:0003677">
    <property type="term" value="F:DNA binding"/>
    <property type="evidence" value="ECO:0007669"/>
    <property type="project" value="UniProtKB-KW"/>
</dbReference>
<dbReference type="GO" id="GO:0036297">
    <property type="term" value="P:interstrand cross-link repair"/>
    <property type="evidence" value="ECO:0007669"/>
    <property type="project" value="InterPro"/>
</dbReference>
<dbReference type="CDD" id="cd20076">
    <property type="entry name" value="XPF_nuclease_FAAP24"/>
    <property type="match status" value="1"/>
</dbReference>
<dbReference type="FunFam" id="1.10.150.20:FF:000046">
    <property type="entry name" value="Fanconi anemia core complex-associated protein 24"/>
    <property type="match status" value="1"/>
</dbReference>
<dbReference type="FunFam" id="3.40.50.10130:FF:000006">
    <property type="entry name" value="Fanconi anemia core complex-associated protein 24"/>
    <property type="match status" value="1"/>
</dbReference>
<dbReference type="Gene3D" id="3.40.50.10130">
    <property type="match status" value="1"/>
</dbReference>
<dbReference type="Gene3D" id="1.10.150.20">
    <property type="entry name" value="5' to 3' exonuclease, C-terminal subdomain"/>
    <property type="match status" value="1"/>
</dbReference>
<dbReference type="InterPro" id="IPR041663">
    <property type="entry name" value="DisA/LigA_HHH"/>
</dbReference>
<dbReference type="InterPro" id="IPR026985">
    <property type="entry name" value="FAAP24"/>
</dbReference>
<dbReference type="InterPro" id="IPR040646">
    <property type="entry name" value="PND"/>
</dbReference>
<dbReference type="InterPro" id="IPR010994">
    <property type="entry name" value="RuvA_2-like"/>
</dbReference>
<dbReference type="PANTHER" id="PTHR31786">
    <property type="entry name" value="FANCONI ANEMIA CORE COMPLEX-ASSOCIATED PROTEIN 24"/>
    <property type="match status" value="1"/>
</dbReference>
<dbReference type="PANTHER" id="PTHR31786:SF2">
    <property type="entry name" value="FANCONI ANEMIA CORE COMPLEX-ASSOCIATED PROTEIN 24"/>
    <property type="match status" value="1"/>
</dbReference>
<dbReference type="Pfam" id="PF12826">
    <property type="entry name" value="HHH_2"/>
    <property type="match status" value="1"/>
</dbReference>
<dbReference type="Pfam" id="PF17949">
    <property type="entry name" value="PND"/>
    <property type="match status" value="1"/>
</dbReference>
<dbReference type="SUPFAM" id="SSF47781">
    <property type="entry name" value="RuvA domain 2-like"/>
    <property type="match status" value="1"/>
</dbReference>
<comment type="function">
    <text evidence="1">Plays a role in DNA repair through recruitment of the FA core complex to damaged DNA. Regulates FANCD2 monoubiquitination upon DNA damage. Induces chromosomal instability as well as hypersensitivity to DNA cross-linking agents, when repressed. Targets FANCM/FAAP24 complex to the DNA, preferentially to single strand DNA (By similarity).</text>
</comment>
<comment type="subunit">
    <text evidence="1">Belongs to the multisubunit FA complex composed of FANCA, FANCB, FANCC, FANCE, FANCF, FANCG, FANCL/PHF9, FANCM and FAAP24. Interacts with FANCM (By similarity).</text>
</comment>
<comment type="subcellular location">
    <subcellularLocation>
        <location evidence="1">Nucleus</location>
    </subcellularLocation>
</comment>
<comment type="domain">
    <text>The C-terminal region is distantly related to RuvA domain 2, a DNA-binding domain.</text>
</comment>
<feature type="chain" id="PRO_0000270960" description="Fanconi anemia core complex-associated protein 24">
    <location>
        <begin position="1"/>
        <end position="215"/>
    </location>
</feature>
<name>FAP24_BOVIN</name>
<keyword id="KW-0227">DNA damage</keyword>
<keyword id="KW-0234">DNA repair</keyword>
<keyword id="KW-0238">DNA-binding</keyword>
<keyword id="KW-0539">Nucleus</keyword>
<keyword id="KW-1185">Reference proteome</keyword>
<gene>
    <name evidence="2" type="primary">FAAP24</name>
</gene>
<evidence type="ECO:0000250" key="1"/>
<evidence type="ECO:0000250" key="2">
    <source>
        <dbReference type="UniProtKB" id="Q9BTP7"/>
    </source>
</evidence>
<protein>
    <recommendedName>
        <fullName evidence="2">Fanconi anemia core complex-associated protein 24</fullName>
    </recommendedName>
    <alternativeName>
        <fullName>Fanconi anemia-associated protein of 24 kDa</fullName>
    </alternativeName>
</protein>
<accession>Q2KHY5</accession>
<proteinExistence type="evidence at transcript level"/>